<reference key="1">
    <citation type="journal article" date="2005" name="Nature">
        <title>The map-based sequence of the rice genome.</title>
        <authorList>
            <consortium name="International rice genome sequencing project (IRGSP)"/>
        </authorList>
    </citation>
    <scope>NUCLEOTIDE SEQUENCE [LARGE SCALE GENOMIC DNA]</scope>
    <source>
        <strain>cv. Nipponbare</strain>
    </source>
</reference>
<reference key="2">
    <citation type="journal article" date="2008" name="Nucleic Acids Res.">
        <title>The rice annotation project database (RAP-DB): 2008 update.</title>
        <authorList>
            <consortium name="The rice annotation project (RAP)"/>
        </authorList>
    </citation>
    <scope>GENOME REANNOTATION</scope>
    <source>
        <strain>cv. Nipponbare</strain>
    </source>
</reference>
<reference key="3">
    <citation type="journal article" date="2013" name="Rice">
        <title>Improvement of the Oryza sativa Nipponbare reference genome using next generation sequence and optical map data.</title>
        <authorList>
            <person name="Kawahara Y."/>
            <person name="de la Bastide M."/>
            <person name="Hamilton J.P."/>
            <person name="Kanamori H."/>
            <person name="McCombie W.R."/>
            <person name="Ouyang S."/>
            <person name="Schwartz D.C."/>
            <person name="Tanaka T."/>
            <person name="Wu J."/>
            <person name="Zhou S."/>
            <person name="Childs K.L."/>
            <person name="Davidson R.M."/>
            <person name="Lin H."/>
            <person name="Quesada-Ocampo L."/>
            <person name="Vaillancourt B."/>
            <person name="Sakai H."/>
            <person name="Lee S.S."/>
            <person name="Kim J."/>
            <person name="Numa H."/>
            <person name="Itoh T."/>
            <person name="Buell C.R."/>
            <person name="Matsumoto T."/>
        </authorList>
    </citation>
    <scope>GENOME REANNOTATION</scope>
    <source>
        <strain>cv. Nipponbare</strain>
    </source>
</reference>
<reference key="4">
    <citation type="journal article" date="2005" name="PLoS Biol.">
        <title>The genomes of Oryza sativa: a history of duplications.</title>
        <authorList>
            <person name="Yu J."/>
            <person name="Wang J."/>
            <person name="Lin W."/>
            <person name="Li S."/>
            <person name="Li H."/>
            <person name="Zhou J."/>
            <person name="Ni P."/>
            <person name="Dong W."/>
            <person name="Hu S."/>
            <person name="Zeng C."/>
            <person name="Zhang J."/>
            <person name="Zhang Y."/>
            <person name="Li R."/>
            <person name="Xu Z."/>
            <person name="Li S."/>
            <person name="Li X."/>
            <person name="Zheng H."/>
            <person name="Cong L."/>
            <person name="Lin L."/>
            <person name="Yin J."/>
            <person name="Geng J."/>
            <person name="Li G."/>
            <person name="Shi J."/>
            <person name="Liu J."/>
            <person name="Lv H."/>
            <person name="Li J."/>
            <person name="Wang J."/>
            <person name="Deng Y."/>
            <person name="Ran L."/>
            <person name="Shi X."/>
            <person name="Wang X."/>
            <person name="Wu Q."/>
            <person name="Li C."/>
            <person name="Ren X."/>
            <person name="Wang J."/>
            <person name="Wang X."/>
            <person name="Li D."/>
            <person name="Liu D."/>
            <person name="Zhang X."/>
            <person name="Ji Z."/>
            <person name="Zhao W."/>
            <person name="Sun Y."/>
            <person name="Zhang Z."/>
            <person name="Bao J."/>
            <person name="Han Y."/>
            <person name="Dong L."/>
            <person name="Ji J."/>
            <person name="Chen P."/>
            <person name="Wu S."/>
            <person name="Liu J."/>
            <person name="Xiao Y."/>
            <person name="Bu D."/>
            <person name="Tan J."/>
            <person name="Yang L."/>
            <person name="Ye C."/>
            <person name="Zhang J."/>
            <person name="Xu J."/>
            <person name="Zhou Y."/>
            <person name="Yu Y."/>
            <person name="Zhang B."/>
            <person name="Zhuang S."/>
            <person name="Wei H."/>
            <person name="Liu B."/>
            <person name="Lei M."/>
            <person name="Yu H."/>
            <person name="Li Y."/>
            <person name="Xu H."/>
            <person name="Wei S."/>
            <person name="He X."/>
            <person name="Fang L."/>
            <person name="Zhang Z."/>
            <person name="Zhang Y."/>
            <person name="Huang X."/>
            <person name="Su Z."/>
            <person name="Tong W."/>
            <person name="Li J."/>
            <person name="Tong Z."/>
            <person name="Li S."/>
            <person name="Ye J."/>
            <person name="Wang L."/>
            <person name="Fang L."/>
            <person name="Lei T."/>
            <person name="Chen C.-S."/>
            <person name="Chen H.-C."/>
            <person name="Xu Z."/>
            <person name="Li H."/>
            <person name="Huang H."/>
            <person name="Zhang F."/>
            <person name="Xu H."/>
            <person name="Li N."/>
            <person name="Zhao C."/>
            <person name="Li S."/>
            <person name="Dong L."/>
            <person name="Huang Y."/>
            <person name="Li L."/>
            <person name="Xi Y."/>
            <person name="Qi Q."/>
            <person name="Li W."/>
            <person name="Zhang B."/>
            <person name="Hu W."/>
            <person name="Zhang Y."/>
            <person name="Tian X."/>
            <person name="Jiao Y."/>
            <person name="Liang X."/>
            <person name="Jin J."/>
            <person name="Gao L."/>
            <person name="Zheng W."/>
            <person name="Hao B."/>
            <person name="Liu S.-M."/>
            <person name="Wang W."/>
            <person name="Yuan L."/>
            <person name="Cao M."/>
            <person name="McDermott J."/>
            <person name="Samudrala R."/>
            <person name="Wang J."/>
            <person name="Wong G.K.-S."/>
            <person name="Yang H."/>
        </authorList>
    </citation>
    <scope>NUCLEOTIDE SEQUENCE [LARGE SCALE GENOMIC DNA]</scope>
    <source>
        <strain>cv. Nipponbare</strain>
    </source>
</reference>
<reference key="5">
    <citation type="journal article" date="2006" name="Funct. Integr. Genomics">
        <title>Structure and expression analysis of early auxin-responsive Aux/IAA gene family in rice (Oryza sativa).</title>
        <authorList>
            <person name="Jain M."/>
            <person name="Kaur N."/>
            <person name="Garg R."/>
            <person name="Thakur J.K."/>
            <person name="Tyagi A.K."/>
            <person name="Khurana J.P."/>
        </authorList>
    </citation>
    <scope>NOMENCLATURE</scope>
</reference>
<keyword id="KW-0927">Auxin signaling pathway</keyword>
<keyword id="KW-0539">Nucleus</keyword>
<keyword id="KW-1185">Reference proteome</keyword>
<keyword id="KW-0678">Repressor</keyword>
<keyword id="KW-0804">Transcription</keyword>
<keyword id="KW-0805">Transcription regulation</keyword>
<proteinExistence type="evidence at transcript level"/>
<dbReference type="EMBL" id="AP008207">
    <property type="protein sequence ID" value="BAF04692.1"/>
    <property type="status" value="ALT_SEQ"/>
    <property type="molecule type" value="Genomic_DNA"/>
</dbReference>
<dbReference type="EMBL" id="AP014957">
    <property type="status" value="NOT_ANNOTATED_CDS"/>
    <property type="molecule type" value="Genomic_DNA"/>
</dbReference>
<dbReference type="EMBL" id="CM000138">
    <property type="protein sequence ID" value="EAZ11485.1"/>
    <property type="molecule type" value="Genomic_DNA"/>
</dbReference>
<dbReference type="RefSeq" id="XP_015629606.1">
    <property type="nucleotide sequence ID" value="XM_015774120.1"/>
</dbReference>
<dbReference type="SMR" id="A2ZRY8"/>
<dbReference type="FunCoup" id="A2ZRY8">
    <property type="interactions" value="682"/>
</dbReference>
<dbReference type="STRING" id="39947.A2ZRY8"/>
<dbReference type="PaxDb" id="39947-A2ZRY8"/>
<dbReference type="KEGG" id="dosa:Os01g0286900"/>
<dbReference type="eggNOG" id="ENOG502S04C">
    <property type="taxonomic scope" value="Eukaryota"/>
</dbReference>
<dbReference type="InParanoid" id="A2ZRY8"/>
<dbReference type="OrthoDB" id="652411at2759"/>
<dbReference type="PlantReactome" id="R-OSA-5608118">
    <property type="pathway name" value="Auxin signalling"/>
</dbReference>
<dbReference type="Proteomes" id="UP000000763">
    <property type="component" value="Chromosome 1"/>
</dbReference>
<dbReference type="Proteomes" id="UP000007752">
    <property type="component" value="Chromosome 1"/>
</dbReference>
<dbReference type="Proteomes" id="UP000059680">
    <property type="component" value="Chromosome 1"/>
</dbReference>
<dbReference type="GO" id="GO:0005634">
    <property type="term" value="C:nucleus"/>
    <property type="evidence" value="ECO:0007669"/>
    <property type="project" value="UniProtKB-SubCell"/>
</dbReference>
<dbReference type="GO" id="GO:0009734">
    <property type="term" value="P:auxin-activated signaling pathway"/>
    <property type="evidence" value="ECO:0007669"/>
    <property type="project" value="UniProtKB-KW"/>
</dbReference>
<dbReference type="GO" id="GO:0006355">
    <property type="term" value="P:regulation of DNA-templated transcription"/>
    <property type="evidence" value="ECO:0007669"/>
    <property type="project" value="InterPro"/>
</dbReference>
<dbReference type="Gene3D" id="3.10.20.90">
    <property type="entry name" value="Phosphatidylinositol 3-kinase Catalytic Subunit, Chain A, domain 1"/>
    <property type="match status" value="1"/>
</dbReference>
<dbReference type="InterPro" id="IPR033389">
    <property type="entry name" value="AUX/IAA_dom"/>
</dbReference>
<dbReference type="InterPro" id="IPR003311">
    <property type="entry name" value="AUX_IAA"/>
</dbReference>
<dbReference type="InterPro" id="IPR053793">
    <property type="entry name" value="PB1-like"/>
</dbReference>
<dbReference type="PANTHER" id="PTHR31734">
    <property type="entry name" value="AUXIN-RESPONSIVE PROTEIN IAA17"/>
    <property type="match status" value="1"/>
</dbReference>
<dbReference type="PANTHER" id="PTHR31734:SF94">
    <property type="entry name" value="AUXIN-RESPONSIVE PROTEIN IAA30"/>
    <property type="match status" value="1"/>
</dbReference>
<dbReference type="Pfam" id="PF02309">
    <property type="entry name" value="AUX_IAA"/>
    <property type="match status" value="1"/>
</dbReference>
<dbReference type="SUPFAM" id="SSF54277">
    <property type="entry name" value="CAD &amp; PB1 domains"/>
    <property type="match status" value="1"/>
</dbReference>
<dbReference type="PROSITE" id="PS51745">
    <property type="entry name" value="PB1"/>
    <property type="match status" value="1"/>
</dbReference>
<evidence type="ECO:0000250" key="1"/>
<evidence type="ECO:0000255" key="2">
    <source>
        <dbReference type="PROSITE-ProRule" id="PRU01081"/>
    </source>
</evidence>
<evidence type="ECO:0000256" key="3">
    <source>
        <dbReference type="SAM" id="MobiDB-lite"/>
    </source>
</evidence>
<evidence type="ECO:0000305" key="4"/>
<accession>A2ZRY8</accession>
<accession>Q0JNI6</accession>
<accession>Q59AF4</accession>
<feature type="chain" id="PRO_0000223203" description="Auxin-responsive protein IAA4">
    <location>
        <begin position="1"/>
        <end position="203"/>
    </location>
</feature>
<feature type="domain" description="PB1" evidence="2">
    <location>
        <begin position="108"/>
        <end position="202"/>
    </location>
</feature>
<feature type="region of interest" description="Disordered" evidence="3">
    <location>
        <begin position="1"/>
        <end position="31"/>
    </location>
</feature>
<feature type="short sequence motif" description="EAR-like (transcriptional repression)" evidence="1">
    <location>
        <begin position="40"/>
        <end position="44"/>
    </location>
</feature>
<feature type="compositionally biased region" description="Low complexity" evidence="3">
    <location>
        <begin position="10"/>
        <end position="31"/>
    </location>
</feature>
<name>IAA4_ORYSJ</name>
<gene>
    <name type="primary">IAA4</name>
    <name type="synonym">IAA20</name>
    <name type="ordered locus">Os01g0286900</name>
    <name type="ordered locus">LOC_Os01g18360</name>
    <name type="ORF">OsJ_001310</name>
</gene>
<protein>
    <recommendedName>
        <fullName>Auxin-responsive protein IAA4</fullName>
    </recommendedName>
    <alternativeName>
        <fullName>Indoleacetic acid-induced protein 4</fullName>
    </alternativeName>
</protein>
<sequence>MEECKGGGMSPSSSMDSSTHPALSTTSSAATARRDLSTDLRLGLSLSTSSSSSLLQAAAAAAAADDSIPSTPRNSQVHADWPPIKPFLRSALQKASAAGGGGARRRRTLFVKVYMEGVPIGRKLDLLLLDGYDSLLIKLCHMFKTPITYADVMECHQQVPGQKAAHVLTYEDQDGDWMMVGDVPWELFLSSVKKLRIARMDKC</sequence>
<comment type="function">
    <text evidence="1">Aux/IAA proteins are short-lived transcriptional factors that function as repressors of early auxin response genes at low auxin concentrations.</text>
</comment>
<comment type="subunit">
    <text evidence="1">Homodimers and heterodimers.</text>
</comment>
<comment type="subcellular location">
    <subcellularLocation>
        <location evidence="1">Nucleus</location>
    </subcellularLocation>
</comment>
<comment type="induction">
    <text>By auxin.</text>
</comment>
<comment type="similarity">
    <text evidence="4">Belongs to the Aux/IAA family.</text>
</comment>
<comment type="sequence caution" evidence="4">
    <conflict type="erroneous gene model prediction">
        <sequence resource="EMBL-CDS" id="BAF04692"/>
    </conflict>
</comment>
<organism>
    <name type="scientific">Oryza sativa subsp. japonica</name>
    <name type="common">Rice</name>
    <dbReference type="NCBI Taxonomy" id="39947"/>
    <lineage>
        <taxon>Eukaryota</taxon>
        <taxon>Viridiplantae</taxon>
        <taxon>Streptophyta</taxon>
        <taxon>Embryophyta</taxon>
        <taxon>Tracheophyta</taxon>
        <taxon>Spermatophyta</taxon>
        <taxon>Magnoliopsida</taxon>
        <taxon>Liliopsida</taxon>
        <taxon>Poales</taxon>
        <taxon>Poaceae</taxon>
        <taxon>BOP clade</taxon>
        <taxon>Oryzoideae</taxon>
        <taxon>Oryzeae</taxon>
        <taxon>Oryzinae</taxon>
        <taxon>Oryza</taxon>
        <taxon>Oryza sativa</taxon>
    </lineage>
</organism>